<proteinExistence type="inferred from homology"/>
<reference key="1">
    <citation type="journal article" date="2005" name="Proc. Natl. Acad. Sci. U.S.A.">
        <title>The psychrophilic lifestyle as revealed by the genome sequence of Colwellia psychrerythraea 34H through genomic and proteomic analyses.</title>
        <authorList>
            <person name="Methe B.A."/>
            <person name="Nelson K.E."/>
            <person name="Deming J.W."/>
            <person name="Momen B."/>
            <person name="Melamud E."/>
            <person name="Zhang X."/>
            <person name="Moult J."/>
            <person name="Madupu R."/>
            <person name="Nelson W.C."/>
            <person name="Dodson R.J."/>
            <person name="Brinkac L.M."/>
            <person name="Daugherty S.C."/>
            <person name="Durkin A.S."/>
            <person name="DeBoy R.T."/>
            <person name="Kolonay J.F."/>
            <person name="Sullivan S.A."/>
            <person name="Zhou L."/>
            <person name="Davidsen T.M."/>
            <person name="Wu M."/>
            <person name="Huston A.L."/>
            <person name="Lewis M."/>
            <person name="Weaver B."/>
            <person name="Weidman J.F."/>
            <person name="Khouri H."/>
            <person name="Utterback T.R."/>
            <person name="Feldblyum T.V."/>
            <person name="Fraser C.M."/>
        </authorList>
    </citation>
    <scope>NUCLEOTIDE SEQUENCE [LARGE SCALE GENOMIC DNA]</scope>
    <source>
        <strain>34H / ATCC BAA-681</strain>
    </source>
</reference>
<protein>
    <recommendedName>
        <fullName evidence="1">tRNA N6-adenosine threonylcarbamoyltransferase</fullName>
        <ecNumber evidence="1">2.3.1.234</ecNumber>
    </recommendedName>
    <alternativeName>
        <fullName evidence="1">N6-L-threonylcarbamoyladenine synthase</fullName>
        <shortName evidence="1">t(6)A synthase</shortName>
    </alternativeName>
    <alternativeName>
        <fullName evidence="1">t(6)A37 threonylcarbamoyladenosine biosynthesis protein TsaD</fullName>
    </alternativeName>
    <alternativeName>
        <fullName evidence="1">tRNA threonylcarbamoyladenosine biosynthesis protein TsaD</fullName>
    </alternativeName>
</protein>
<gene>
    <name evidence="1" type="primary">tsaD</name>
    <name type="synonym">gcp</name>
    <name type="ordered locus">CPS_4338</name>
</gene>
<comment type="function">
    <text evidence="1">Required for the formation of a threonylcarbamoyl group on adenosine at position 37 (t(6)A37) in tRNAs that read codons beginning with adenine. Is involved in the transfer of the threonylcarbamoyl moiety of threonylcarbamoyl-AMP (TC-AMP) to the N6 group of A37, together with TsaE and TsaB. TsaD likely plays a direct catalytic role in this reaction.</text>
</comment>
<comment type="catalytic activity">
    <reaction evidence="1">
        <text>L-threonylcarbamoyladenylate + adenosine(37) in tRNA = N(6)-L-threonylcarbamoyladenosine(37) in tRNA + AMP + H(+)</text>
        <dbReference type="Rhea" id="RHEA:37059"/>
        <dbReference type="Rhea" id="RHEA-COMP:10162"/>
        <dbReference type="Rhea" id="RHEA-COMP:10163"/>
        <dbReference type="ChEBI" id="CHEBI:15378"/>
        <dbReference type="ChEBI" id="CHEBI:73682"/>
        <dbReference type="ChEBI" id="CHEBI:74411"/>
        <dbReference type="ChEBI" id="CHEBI:74418"/>
        <dbReference type="ChEBI" id="CHEBI:456215"/>
        <dbReference type="EC" id="2.3.1.234"/>
    </reaction>
</comment>
<comment type="cofactor">
    <cofactor evidence="1">
        <name>Fe(2+)</name>
        <dbReference type="ChEBI" id="CHEBI:29033"/>
    </cofactor>
    <text evidence="1">Binds 1 Fe(2+) ion per subunit.</text>
</comment>
<comment type="subcellular location">
    <subcellularLocation>
        <location evidence="1">Cytoplasm</location>
    </subcellularLocation>
</comment>
<comment type="similarity">
    <text evidence="1">Belongs to the KAE1 / TsaD family.</text>
</comment>
<sequence>MRILGIETSCDETGIAIYDDGLGDSPEGILAHRLYSQIAVHADYGGVVPELASRDHVRKTIPLIKEVLADANLTPKDLDGVAYTAGPGLVGALLVGCSIGRSLAYGWELPAVPVHHMEGHLLAPMLEDDVPEFPFVALLVSGGHTMLVRVDAIGEYKLLGESVDDAAGEAFDKTAKLLGLDYPGGPALSKMAESGEAGRFKLPRPMTDRPGLDFSFSGLKTAAGTLVRKECLNLSDSDLKQTHADIANAFQQAVVDTLAIKCKRALQQEKLSRLVIAGGVSANTALREQLAITTKKLGGSVFYPRPEFCTDNGAMIAYAGLQRLKAGTDADLTFKANPRWALDSLPPVK</sequence>
<evidence type="ECO:0000255" key="1">
    <source>
        <dbReference type="HAMAP-Rule" id="MF_01445"/>
    </source>
</evidence>
<feature type="chain" id="PRO_0000303335" description="tRNA N6-adenosine threonylcarbamoyltransferase">
    <location>
        <begin position="1"/>
        <end position="349"/>
    </location>
</feature>
<feature type="binding site" evidence="1">
    <location>
        <position position="116"/>
    </location>
    <ligand>
        <name>Fe cation</name>
        <dbReference type="ChEBI" id="CHEBI:24875"/>
    </ligand>
</feature>
<feature type="binding site" evidence="1">
    <location>
        <position position="120"/>
    </location>
    <ligand>
        <name>Fe cation</name>
        <dbReference type="ChEBI" id="CHEBI:24875"/>
    </ligand>
</feature>
<feature type="binding site" evidence="1">
    <location>
        <begin position="139"/>
        <end position="143"/>
    </location>
    <ligand>
        <name>substrate</name>
    </ligand>
</feature>
<feature type="binding site" evidence="1">
    <location>
        <position position="172"/>
    </location>
    <ligand>
        <name>substrate</name>
    </ligand>
</feature>
<feature type="binding site" evidence="1">
    <location>
        <position position="185"/>
    </location>
    <ligand>
        <name>substrate</name>
    </ligand>
</feature>
<feature type="binding site" evidence="1">
    <location>
        <position position="283"/>
    </location>
    <ligand>
        <name>substrate</name>
    </ligand>
</feature>
<feature type="binding site" evidence="1">
    <location>
        <position position="311"/>
    </location>
    <ligand>
        <name>Fe cation</name>
        <dbReference type="ChEBI" id="CHEBI:24875"/>
    </ligand>
</feature>
<organism>
    <name type="scientific">Colwellia psychrerythraea (strain 34H / ATCC BAA-681)</name>
    <name type="common">Vibrio psychroerythus</name>
    <dbReference type="NCBI Taxonomy" id="167879"/>
    <lineage>
        <taxon>Bacteria</taxon>
        <taxon>Pseudomonadati</taxon>
        <taxon>Pseudomonadota</taxon>
        <taxon>Gammaproteobacteria</taxon>
        <taxon>Alteromonadales</taxon>
        <taxon>Colwelliaceae</taxon>
        <taxon>Colwellia</taxon>
    </lineage>
</organism>
<name>TSAD_COLP3</name>
<dbReference type="EC" id="2.3.1.234" evidence="1"/>
<dbReference type="EMBL" id="CP000083">
    <property type="protein sequence ID" value="AAZ24450.1"/>
    <property type="molecule type" value="Genomic_DNA"/>
</dbReference>
<dbReference type="RefSeq" id="WP_011045068.1">
    <property type="nucleotide sequence ID" value="NC_003910.7"/>
</dbReference>
<dbReference type="SMR" id="Q47W35"/>
<dbReference type="STRING" id="167879.CPS_4338"/>
<dbReference type="KEGG" id="cps:CPS_4338"/>
<dbReference type="eggNOG" id="COG0533">
    <property type="taxonomic scope" value="Bacteria"/>
</dbReference>
<dbReference type="HOGENOM" id="CLU_023208_0_2_6"/>
<dbReference type="Proteomes" id="UP000000547">
    <property type="component" value="Chromosome"/>
</dbReference>
<dbReference type="GO" id="GO:0005737">
    <property type="term" value="C:cytoplasm"/>
    <property type="evidence" value="ECO:0007669"/>
    <property type="project" value="UniProtKB-SubCell"/>
</dbReference>
<dbReference type="GO" id="GO:0005506">
    <property type="term" value="F:iron ion binding"/>
    <property type="evidence" value="ECO:0007669"/>
    <property type="project" value="UniProtKB-UniRule"/>
</dbReference>
<dbReference type="GO" id="GO:0061711">
    <property type="term" value="F:N(6)-L-threonylcarbamoyladenine synthase activity"/>
    <property type="evidence" value="ECO:0007669"/>
    <property type="project" value="UniProtKB-EC"/>
</dbReference>
<dbReference type="GO" id="GO:0002949">
    <property type="term" value="P:tRNA threonylcarbamoyladenosine modification"/>
    <property type="evidence" value="ECO:0007669"/>
    <property type="project" value="UniProtKB-UniRule"/>
</dbReference>
<dbReference type="CDD" id="cd24133">
    <property type="entry name" value="ASKHA_NBD_TsaD_bac"/>
    <property type="match status" value="1"/>
</dbReference>
<dbReference type="FunFam" id="3.30.420.40:FF:000031">
    <property type="entry name" value="tRNA N6-adenosine threonylcarbamoyltransferase"/>
    <property type="match status" value="1"/>
</dbReference>
<dbReference type="Gene3D" id="3.30.420.40">
    <property type="match status" value="2"/>
</dbReference>
<dbReference type="HAMAP" id="MF_01445">
    <property type="entry name" value="TsaD"/>
    <property type="match status" value="1"/>
</dbReference>
<dbReference type="InterPro" id="IPR043129">
    <property type="entry name" value="ATPase_NBD"/>
</dbReference>
<dbReference type="InterPro" id="IPR000905">
    <property type="entry name" value="Gcp-like_dom"/>
</dbReference>
<dbReference type="InterPro" id="IPR017861">
    <property type="entry name" value="KAE1/TsaD"/>
</dbReference>
<dbReference type="InterPro" id="IPR022450">
    <property type="entry name" value="TsaD"/>
</dbReference>
<dbReference type="NCBIfam" id="TIGR00329">
    <property type="entry name" value="gcp_kae1"/>
    <property type="match status" value="1"/>
</dbReference>
<dbReference type="NCBIfam" id="TIGR03723">
    <property type="entry name" value="T6A_TsaD_YgjD"/>
    <property type="match status" value="1"/>
</dbReference>
<dbReference type="PANTHER" id="PTHR11735">
    <property type="entry name" value="TRNA N6-ADENOSINE THREONYLCARBAMOYLTRANSFERASE"/>
    <property type="match status" value="1"/>
</dbReference>
<dbReference type="PANTHER" id="PTHR11735:SF6">
    <property type="entry name" value="TRNA N6-ADENOSINE THREONYLCARBAMOYLTRANSFERASE, MITOCHONDRIAL"/>
    <property type="match status" value="1"/>
</dbReference>
<dbReference type="Pfam" id="PF00814">
    <property type="entry name" value="TsaD"/>
    <property type="match status" value="1"/>
</dbReference>
<dbReference type="PRINTS" id="PR00789">
    <property type="entry name" value="OSIALOPTASE"/>
</dbReference>
<dbReference type="SUPFAM" id="SSF53067">
    <property type="entry name" value="Actin-like ATPase domain"/>
    <property type="match status" value="2"/>
</dbReference>
<keyword id="KW-0012">Acyltransferase</keyword>
<keyword id="KW-0963">Cytoplasm</keyword>
<keyword id="KW-0408">Iron</keyword>
<keyword id="KW-0479">Metal-binding</keyword>
<keyword id="KW-0808">Transferase</keyword>
<keyword id="KW-0819">tRNA processing</keyword>
<accession>Q47W35</accession>